<evidence type="ECO:0000255" key="1">
    <source>
        <dbReference type="HAMAP-Rule" id="MF_01358"/>
    </source>
</evidence>
<feature type="chain" id="PRO_0000357976" description="NAD(P)H-quinone oxidoreductase subunit H, chloroplastic">
    <location>
        <begin position="1"/>
        <end position="393"/>
    </location>
</feature>
<organism>
    <name type="scientific">Chlorokybus atmophyticus</name>
    <name type="common">Soil alga</name>
    <dbReference type="NCBI Taxonomy" id="3144"/>
    <lineage>
        <taxon>Eukaryota</taxon>
        <taxon>Viridiplantae</taxon>
        <taxon>Streptophyta</taxon>
        <taxon>Chlorokybophyceae</taxon>
        <taxon>Chlorokybales</taxon>
        <taxon>Chlorokybaceae</taxon>
        <taxon>Chlorokybus</taxon>
    </lineage>
</organism>
<reference key="1">
    <citation type="journal article" date="2007" name="BMC Biol.">
        <title>A clade uniting the green algae Mesostigma viride and Chlorokybus atmophyticus represents the deepest branch of the Streptophyta in chloroplast genome-based phylogenies.</title>
        <authorList>
            <person name="Lemieux C."/>
            <person name="Otis C."/>
            <person name="Turmel M."/>
        </authorList>
    </citation>
    <scope>NUCLEOTIDE SEQUENCE [LARGE SCALE GENOMIC DNA]</scope>
    <source>
        <strain>SAG 48.80</strain>
    </source>
</reference>
<geneLocation type="chloroplast"/>
<gene>
    <name evidence="1" type="primary">ndhH</name>
</gene>
<protein>
    <recommendedName>
        <fullName evidence="1">NAD(P)H-quinone oxidoreductase subunit H, chloroplastic</fullName>
        <ecNumber evidence="1">7.1.1.-</ecNumber>
    </recommendedName>
    <alternativeName>
        <fullName>NAD(P)H dehydrogenase subunit H</fullName>
    </alternativeName>
    <alternativeName>
        <fullName evidence="1">NADH-plastoquinone oxidoreductase 49 kDa subunit</fullName>
    </alternativeName>
    <alternativeName>
        <fullName evidence="1">NADH-plastoquinone oxidoreductase subunit H</fullName>
    </alternativeName>
</protein>
<sequence>MTMLETKTDPMVISMGPHHPSMHGVLRLIVTLDGENVIDCEPVLGYLHRGMEKIAENRTIVQYLPYVTRWDYLATMFTEAITVNAPERLANIEVPKRASYIRVIMLELSRIASHLLWLGPFMADIGAQTPFFYIFREREMIYDLFEAATGMRMMHNYFRIGGVAADLPYGWVDKCLDFCDYFLPKVDEYERLITNNPIFLKRVKDIGKISKEDAINWGLSGPMLRASGVKWDLRKVDNYECYDELDWSIQWQSDGDCLARYQVRIGEMRESIKIIQQALKAIPGGPYENLEARRLSKGRKSEWNNFEYQFIGKKPSPTFKMPKQEHYVRVEAPKGELGVFLIGDDNVFPWRWKIRAPGFINVQILPQLVQGMKLADIMTILGSIDIIMGEVDR</sequence>
<comment type="function">
    <text evidence="1">NDH shuttles electrons from NAD(P)H:plastoquinone, via FMN and iron-sulfur (Fe-S) centers, to quinones in the photosynthetic chain and possibly in a chloroplast respiratory chain. The immediate electron acceptor for the enzyme in this species is believed to be plastoquinone. Couples the redox reaction to proton translocation, and thus conserves the redox energy in a proton gradient.</text>
</comment>
<comment type="catalytic activity">
    <reaction evidence="1">
        <text>a plastoquinone + NADH + (n+1) H(+)(in) = a plastoquinol + NAD(+) + n H(+)(out)</text>
        <dbReference type="Rhea" id="RHEA:42608"/>
        <dbReference type="Rhea" id="RHEA-COMP:9561"/>
        <dbReference type="Rhea" id="RHEA-COMP:9562"/>
        <dbReference type="ChEBI" id="CHEBI:15378"/>
        <dbReference type="ChEBI" id="CHEBI:17757"/>
        <dbReference type="ChEBI" id="CHEBI:57540"/>
        <dbReference type="ChEBI" id="CHEBI:57945"/>
        <dbReference type="ChEBI" id="CHEBI:62192"/>
    </reaction>
</comment>
<comment type="catalytic activity">
    <reaction evidence="1">
        <text>a plastoquinone + NADPH + (n+1) H(+)(in) = a plastoquinol + NADP(+) + n H(+)(out)</text>
        <dbReference type="Rhea" id="RHEA:42612"/>
        <dbReference type="Rhea" id="RHEA-COMP:9561"/>
        <dbReference type="Rhea" id="RHEA-COMP:9562"/>
        <dbReference type="ChEBI" id="CHEBI:15378"/>
        <dbReference type="ChEBI" id="CHEBI:17757"/>
        <dbReference type="ChEBI" id="CHEBI:57783"/>
        <dbReference type="ChEBI" id="CHEBI:58349"/>
        <dbReference type="ChEBI" id="CHEBI:62192"/>
    </reaction>
</comment>
<comment type="subunit">
    <text evidence="1">NDH is composed of at least 16 different subunits, 5 of which are encoded in the nucleus.</text>
</comment>
<comment type="subcellular location">
    <subcellularLocation>
        <location evidence="1">Plastid</location>
        <location evidence="1">Chloroplast thylakoid membrane</location>
        <topology evidence="1">Peripheral membrane protein</topology>
        <orientation evidence="1">Stromal side</orientation>
    </subcellularLocation>
</comment>
<comment type="similarity">
    <text evidence="1">Belongs to the complex I 49 kDa subunit family.</text>
</comment>
<proteinExistence type="inferred from homology"/>
<name>NDHH_CHLAT</name>
<dbReference type="EC" id="7.1.1.-" evidence="1"/>
<dbReference type="EMBL" id="DQ422812">
    <property type="protein sequence ID" value="ABD62196.2"/>
    <property type="molecule type" value="Genomic_DNA"/>
</dbReference>
<dbReference type="RefSeq" id="YP_001019161.1">
    <property type="nucleotide sequence ID" value="NC_008822.1"/>
</dbReference>
<dbReference type="SMR" id="Q19V59"/>
<dbReference type="GeneID" id="4783193"/>
<dbReference type="GO" id="GO:0009535">
    <property type="term" value="C:chloroplast thylakoid membrane"/>
    <property type="evidence" value="ECO:0007669"/>
    <property type="project" value="UniProtKB-SubCell"/>
</dbReference>
<dbReference type="GO" id="GO:0051287">
    <property type="term" value="F:NAD binding"/>
    <property type="evidence" value="ECO:0007669"/>
    <property type="project" value="InterPro"/>
</dbReference>
<dbReference type="GO" id="GO:0016655">
    <property type="term" value="F:oxidoreductase activity, acting on NAD(P)H, quinone or similar compound as acceptor"/>
    <property type="evidence" value="ECO:0007669"/>
    <property type="project" value="UniProtKB-UniRule"/>
</dbReference>
<dbReference type="GO" id="GO:0048038">
    <property type="term" value="F:quinone binding"/>
    <property type="evidence" value="ECO:0007669"/>
    <property type="project" value="UniProtKB-KW"/>
</dbReference>
<dbReference type="GO" id="GO:0019684">
    <property type="term" value="P:photosynthesis, light reaction"/>
    <property type="evidence" value="ECO:0007669"/>
    <property type="project" value="UniProtKB-UniRule"/>
</dbReference>
<dbReference type="Gene3D" id="1.10.645.10">
    <property type="entry name" value="Cytochrome-c3 Hydrogenase, chain B"/>
    <property type="match status" value="1"/>
</dbReference>
<dbReference type="HAMAP" id="MF_01358">
    <property type="entry name" value="NDH1_NuoD"/>
    <property type="match status" value="1"/>
</dbReference>
<dbReference type="InterPro" id="IPR001135">
    <property type="entry name" value="NADH_Q_OxRdtase_suD"/>
</dbReference>
<dbReference type="InterPro" id="IPR014029">
    <property type="entry name" value="NADH_UbQ_OxRdtase_49kDa_CS"/>
</dbReference>
<dbReference type="InterPro" id="IPR022885">
    <property type="entry name" value="NDH1_su_D/H"/>
</dbReference>
<dbReference type="InterPro" id="IPR029014">
    <property type="entry name" value="NiFe-Hase_large"/>
</dbReference>
<dbReference type="NCBIfam" id="TIGR01962">
    <property type="entry name" value="NuoD"/>
    <property type="match status" value="1"/>
</dbReference>
<dbReference type="NCBIfam" id="NF004739">
    <property type="entry name" value="PRK06075.1"/>
    <property type="match status" value="1"/>
</dbReference>
<dbReference type="NCBIfam" id="NF005649">
    <property type="entry name" value="PRK07415.1"/>
    <property type="match status" value="1"/>
</dbReference>
<dbReference type="PANTHER" id="PTHR11993:SF10">
    <property type="entry name" value="NADH DEHYDROGENASE [UBIQUINONE] IRON-SULFUR PROTEIN 2, MITOCHONDRIAL"/>
    <property type="match status" value="1"/>
</dbReference>
<dbReference type="PANTHER" id="PTHR11993">
    <property type="entry name" value="NADH-UBIQUINONE OXIDOREDUCTASE 49 KDA SUBUNIT"/>
    <property type="match status" value="1"/>
</dbReference>
<dbReference type="Pfam" id="PF00346">
    <property type="entry name" value="Complex1_49kDa"/>
    <property type="match status" value="1"/>
</dbReference>
<dbReference type="SUPFAM" id="SSF56762">
    <property type="entry name" value="HydB/Nqo4-like"/>
    <property type="match status" value="1"/>
</dbReference>
<dbReference type="PROSITE" id="PS00535">
    <property type="entry name" value="COMPLEX1_49K"/>
    <property type="match status" value="1"/>
</dbReference>
<keyword id="KW-0150">Chloroplast</keyword>
<keyword id="KW-0472">Membrane</keyword>
<keyword id="KW-0520">NAD</keyword>
<keyword id="KW-0521">NADP</keyword>
<keyword id="KW-0934">Plastid</keyword>
<keyword id="KW-0618">Plastoquinone</keyword>
<keyword id="KW-0874">Quinone</keyword>
<keyword id="KW-0793">Thylakoid</keyword>
<keyword id="KW-1278">Translocase</keyword>
<keyword id="KW-0813">Transport</keyword>
<accession>Q19V59</accession>